<gene>
    <name type="primary">CRZ1</name>
    <name type="synonym">HAL8</name>
    <name type="synonym">TCN1</name>
    <name type="ordered locus">YNL027W</name>
    <name type="ORF">N2760</name>
</gene>
<dbReference type="EMBL" id="Z71303">
    <property type="protein sequence ID" value="CAA95889.1"/>
    <property type="molecule type" value="Genomic_DNA"/>
</dbReference>
<dbReference type="EMBL" id="BK006947">
    <property type="protein sequence ID" value="DAA10517.1"/>
    <property type="molecule type" value="Genomic_DNA"/>
</dbReference>
<dbReference type="PIR" id="S62939">
    <property type="entry name" value="S62939"/>
</dbReference>
<dbReference type="RefSeq" id="NP_014371.1">
    <property type="nucleotide sequence ID" value="NM_001182866.1"/>
</dbReference>
<dbReference type="BioGRID" id="35799">
    <property type="interactions" value="223"/>
</dbReference>
<dbReference type="DIP" id="DIP-2724N"/>
<dbReference type="ELM" id="P53968"/>
<dbReference type="FunCoup" id="P53968">
    <property type="interactions" value="1153"/>
</dbReference>
<dbReference type="IntAct" id="P53968">
    <property type="interactions" value="21"/>
</dbReference>
<dbReference type="MINT" id="P53968"/>
<dbReference type="STRING" id="4932.YNL027W"/>
<dbReference type="GlyGen" id="P53968">
    <property type="glycosylation" value="1 site"/>
</dbReference>
<dbReference type="iPTMnet" id="P53968"/>
<dbReference type="PaxDb" id="4932-YNL027W"/>
<dbReference type="PeptideAtlas" id="P53968"/>
<dbReference type="EnsemblFungi" id="YNL027W_mRNA">
    <property type="protein sequence ID" value="YNL027W"/>
    <property type="gene ID" value="YNL027W"/>
</dbReference>
<dbReference type="GeneID" id="855704"/>
<dbReference type="KEGG" id="sce:YNL027W"/>
<dbReference type="AGR" id="SGD:S000004972"/>
<dbReference type="SGD" id="S000004972">
    <property type="gene designation" value="CRZ1"/>
</dbReference>
<dbReference type="VEuPathDB" id="FungiDB:YNL027W"/>
<dbReference type="eggNOG" id="KOG1721">
    <property type="taxonomic scope" value="Eukaryota"/>
</dbReference>
<dbReference type="HOGENOM" id="CLU_030450_0_0_1"/>
<dbReference type="InParanoid" id="P53968"/>
<dbReference type="OMA" id="TESNYHT"/>
<dbReference type="OrthoDB" id="8117402at2759"/>
<dbReference type="BioCyc" id="YEAST:G3O-33065-MONOMER"/>
<dbReference type="Reactome" id="R-SCE-3232118">
    <property type="pathway name" value="SUMOylation of transcription factors"/>
</dbReference>
<dbReference type="Reactome" id="R-SCE-6807505">
    <property type="pathway name" value="RNA polymerase II transcribes snRNA genes"/>
</dbReference>
<dbReference type="BioGRID-ORCS" id="855704">
    <property type="hits" value="0 hits in 13 CRISPR screens"/>
</dbReference>
<dbReference type="PRO" id="PR:P53968"/>
<dbReference type="Proteomes" id="UP000002311">
    <property type="component" value="Chromosome XIV"/>
</dbReference>
<dbReference type="RNAct" id="P53968">
    <property type="molecule type" value="protein"/>
</dbReference>
<dbReference type="GO" id="GO:0005737">
    <property type="term" value="C:cytoplasm"/>
    <property type="evidence" value="ECO:0000314"/>
    <property type="project" value="SGD"/>
</dbReference>
<dbReference type="GO" id="GO:0005634">
    <property type="term" value="C:nucleus"/>
    <property type="evidence" value="ECO:0000314"/>
    <property type="project" value="SGD"/>
</dbReference>
<dbReference type="GO" id="GO:0000987">
    <property type="term" value="F:cis-regulatory region sequence-specific DNA binding"/>
    <property type="evidence" value="ECO:0000314"/>
    <property type="project" value="SGD"/>
</dbReference>
<dbReference type="GO" id="GO:0001228">
    <property type="term" value="F:DNA-binding transcription activator activity, RNA polymerase II-specific"/>
    <property type="evidence" value="ECO:0000314"/>
    <property type="project" value="SGD"/>
</dbReference>
<dbReference type="GO" id="GO:0000981">
    <property type="term" value="F:DNA-binding transcription factor activity, RNA polymerase II-specific"/>
    <property type="evidence" value="ECO:0000318"/>
    <property type="project" value="GO_Central"/>
</dbReference>
<dbReference type="GO" id="GO:0000978">
    <property type="term" value="F:RNA polymerase II cis-regulatory region sequence-specific DNA binding"/>
    <property type="evidence" value="ECO:0000318"/>
    <property type="project" value="GO_Central"/>
</dbReference>
<dbReference type="GO" id="GO:0043565">
    <property type="term" value="F:sequence-specific DNA binding"/>
    <property type="evidence" value="ECO:0007005"/>
    <property type="project" value="SGD"/>
</dbReference>
<dbReference type="GO" id="GO:0008270">
    <property type="term" value="F:zinc ion binding"/>
    <property type="evidence" value="ECO:0007669"/>
    <property type="project" value="UniProtKB-KW"/>
</dbReference>
<dbReference type="GO" id="GO:0071475">
    <property type="term" value="P:cellular hyperosmotic salinity response"/>
    <property type="evidence" value="ECO:0000315"/>
    <property type="project" value="SGD"/>
</dbReference>
<dbReference type="GO" id="GO:0071469">
    <property type="term" value="P:cellular response to alkaline pH"/>
    <property type="evidence" value="ECO:0000315"/>
    <property type="project" value="SGD"/>
</dbReference>
<dbReference type="GO" id="GO:0071483">
    <property type="term" value="P:cellular response to blue light"/>
    <property type="evidence" value="ECO:0000314"/>
    <property type="project" value="SGD"/>
</dbReference>
<dbReference type="GO" id="GO:0071277">
    <property type="term" value="P:cellular response to calcium ion"/>
    <property type="evidence" value="ECO:0000315"/>
    <property type="project" value="SGD"/>
</dbReference>
<dbReference type="GO" id="GO:0071444">
    <property type="term" value="P:cellular response to pheromone"/>
    <property type="evidence" value="ECO:0000315"/>
    <property type="project" value="SGD"/>
</dbReference>
<dbReference type="GO" id="GO:0006031">
    <property type="term" value="P:chitin biosynthetic process"/>
    <property type="evidence" value="ECO:0000316"/>
    <property type="project" value="SGD"/>
</dbReference>
<dbReference type="GO" id="GO:0030007">
    <property type="term" value="P:intracellular potassium ion homeostasis"/>
    <property type="evidence" value="ECO:0000314"/>
    <property type="project" value="SGD"/>
</dbReference>
<dbReference type="GO" id="GO:0050801">
    <property type="term" value="P:monoatomic ion homeostasis"/>
    <property type="evidence" value="ECO:0000315"/>
    <property type="project" value="SGD"/>
</dbReference>
<dbReference type="GO" id="GO:2001040">
    <property type="term" value="P:positive regulation of cellular response to drug"/>
    <property type="evidence" value="ECO:0000315"/>
    <property type="project" value="SGD"/>
</dbReference>
<dbReference type="GO" id="GO:0010765">
    <property type="term" value="P:positive regulation of sodium ion transport"/>
    <property type="evidence" value="ECO:0000314"/>
    <property type="project" value="SGD"/>
</dbReference>
<dbReference type="GO" id="GO:0045944">
    <property type="term" value="P:positive regulation of transcription by RNA polymerase II"/>
    <property type="evidence" value="ECO:0000314"/>
    <property type="project" value="SGD"/>
</dbReference>
<dbReference type="GO" id="GO:0006357">
    <property type="term" value="P:regulation of transcription by RNA polymerase II"/>
    <property type="evidence" value="ECO:0000318"/>
    <property type="project" value="GO_Central"/>
</dbReference>
<dbReference type="FunFam" id="3.30.160.60:FF:000181">
    <property type="entry name" value="C2H2 type zinc finger protein"/>
    <property type="match status" value="1"/>
</dbReference>
<dbReference type="FunFam" id="3.30.160.60:FF:000239">
    <property type="entry name" value="C2H2 type zinc finger protein"/>
    <property type="match status" value="1"/>
</dbReference>
<dbReference type="FunFam" id="3.30.160.60:FF:002218">
    <property type="entry name" value="Transcriptional regulator CRZ1"/>
    <property type="match status" value="1"/>
</dbReference>
<dbReference type="Gene3D" id="3.30.160.60">
    <property type="entry name" value="Classic Zinc Finger"/>
    <property type="match status" value="3"/>
</dbReference>
<dbReference type="InterPro" id="IPR050527">
    <property type="entry name" value="Snail/Krueppel_Znf"/>
</dbReference>
<dbReference type="InterPro" id="IPR036236">
    <property type="entry name" value="Znf_C2H2_sf"/>
</dbReference>
<dbReference type="InterPro" id="IPR013087">
    <property type="entry name" value="Znf_C2H2_type"/>
</dbReference>
<dbReference type="PANTHER" id="PTHR24388:SF54">
    <property type="entry name" value="PROTEIN ESCARGOT"/>
    <property type="match status" value="1"/>
</dbReference>
<dbReference type="PANTHER" id="PTHR24388">
    <property type="entry name" value="ZINC FINGER PROTEIN"/>
    <property type="match status" value="1"/>
</dbReference>
<dbReference type="Pfam" id="PF00096">
    <property type="entry name" value="zf-C2H2"/>
    <property type="match status" value="2"/>
</dbReference>
<dbReference type="SMART" id="SM00355">
    <property type="entry name" value="ZnF_C2H2"/>
    <property type="match status" value="2"/>
</dbReference>
<dbReference type="SUPFAM" id="SSF57667">
    <property type="entry name" value="beta-beta-alpha zinc fingers"/>
    <property type="match status" value="1"/>
</dbReference>
<dbReference type="PROSITE" id="PS00028">
    <property type="entry name" value="ZINC_FINGER_C2H2_1"/>
    <property type="match status" value="2"/>
</dbReference>
<dbReference type="PROSITE" id="PS50157">
    <property type="entry name" value="ZINC_FINGER_C2H2_2"/>
    <property type="match status" value="3"/>
</dbReference>
<accession>P53968</accession>
<accession>D6W1F1</accession>
<evidence type="ECO:0000255" key="1">
    <source>
        <dbReference type="PROSITE-ProRule" id="PRU00042"/>
    </source>
</evidence>
<evidence type="ECO:0000256" key="2">
    <source>
        <dbReference type="SAM" id="MobiDB-lite"/>
    </source>
</evidence>
<evidence type="ECO:0000269" key="3">
    <source>
    </source>
</evidence>
<evidence type="ECO:0000269" key="4">
    <source>
    </source>
</evidence>
<evidence type="ECO:0000269" key="5">
    <source>
    </source>
</evidence>
<evidence type="ECO:0000269" key="6">
    <source>
    </source>
</evidence>
<evidence type="ECO:0007744" key="7">
    <source>
    </source>
</evidence>
<evidence type="ECO:0007744" key="8">
    <source>
    </source>
</evidence>
<comment type="function">
    <text evidence="6">Involved in the regulation of calcium ion homeostasis. Binds to the calcineurin-dependent response element. Transcriptionally regulates PMC1, PMR1, PMR2A and FKS2.</text>
</comment>
<comment type="subcellular location">
    <subcellularLocation>
        <location evidence="3">Nucleus</location>
    </subcellularLocation>
    <subcellularLocation>
        <location evidence="3">Cytoplasm</location>
    </subcellularLocation>
</comment>
<comment type="PTM">
    <text evidence="3 5">Phosphorylated. Dephosphorylated by calcineurin which leads to rapid translocation from the cytoplasm to the nucleus. Phosphorylated by the cyclin-CDK PHO80-PHO85.</text>
</comment>
<comment type="miscellaneous">
    <text evidence="4">Present with 1160 molecules/cell in log phase SD medium.</text>
</comment>
<proteinExistence type="evidence at protein level"/>
<sequence>MSFSNGNMASYMTSSNGEEQSINNKNDIDDNSAYRRNNFRNSSNSGSHTFQLSDLDLDVDMRMDSANSSEKISKNLSSGIPDSFDSNVNSLLSPSSGSYSADLNYQSLYKPDLPQQQLQQQQLQQQQQQQQQQQQQQQKQTPTLKVEQSDTFQWDDILTPADNQHRPSLTNQFLSPRSNYDGTTRSSGIDSNYSDTESNYHTPYLYPQDLVSSPAMSHLTANNDDFDDLLSVASMNSNYLLPVNSHGYKHISNLDELDDLLSLTYSDNNLLSASNNSDFNNSNNGIINTADTQNSTIAINKSKVGTNQKMLLTIPTSSTPSPSTHAAPVTPIISIQEFNEGHFPVKNEDDGTLQLKVRDNESYSATNNNNLLRPDDNDYNNEALSDIDRSFEDIINGRKLKLKKSRRRSSQTSNNSFTSRRSSRSRSISPDEKAKSISANREKLLEMADLLPSSENDNNRERYDNDSKTSYNTINSSNFNEDNNNNNLLTSKPKIESGIVNIKNELDDTSKDLGILLDIDSLGQFEQKVGFKNDDNHENNDNGTFSVKKNDNLEKLDSVTNNRKNPANFACDVCGKKFTRPYNLKSHLRTHTNERPFICSICGKAFARQHDRKRHEDLHTGKKRYVCGGKLKDGKPWGCGKKFARSDALGRHFKTESGRRCITPLYEEARQEKSGQES</sequence>
<reference key="1">
    <citation type="journal article" date="1997" name="Nature">
        <title>The nucleotide sequence of Saccharomyces cerevisiae chromosome XIV and its evolutionary implications.</title>
        <authorList>
            <person name="Philippsen P."/>
            <person name="Kleine K."/>
            <person name="Poehlmann R."/>
            <person name="Duesterhoeft A."/>
            <person name="Hamberg K."/>
            <person name="Hegemann J.H."/>
            <person name="Obermaier B."/>
            <person name="Urrestarazu L.A."/>
            <person name="Aert R."/>
            <person name="Albermann K."/>
            <person name="Altmann R."/>
            <person name="Andre B."/>
            <person name="Baladron V."/>
            <person name="Ballesta J.P.G."/>
            <person name="Becam A.-M."/>
            <person name="Beinhauer J.D."/>
            <person name="Boskovic J."/>
            <person name="Buitrago M.J."/>
            <person name="Bussereau F."/>
            <person name="Coster F."/>
            <person name="Crouzet M."/>
            <person name="D'Angelo M."/>
            <person name="Dal Pero F."/>
            <person name="De Antoni A."/>
            <person name="del Rey F."/>
            <person name="Doignon F."/>
            <person name="Domdey H."/>
            <person name="Dubois E."/>
            <person name="Fiedler T.A."/>
            <person name="Fleig U."/>
            <person name="Floeth M."/>
            <person name="Fritz C."/>
            <person name="Gaillardin C."/>
            <person name="Garcia-Cantalejo J.M."/>
            <person name="Glansdorff N."/>
            <person name="Goffeau A."/>
            <person name="Gueldener U."/>
            <person name="Herbert C.J."/>
            <person name="Heumann K."/>
            <person name="Heuss-Neitzel D."/>
            <person name="Hilbert H."/>
            <person name="Hinni K."/>
            <person name="Iraqui Houssaini I."/>
            <person name="Jacquet M."/>
            <person name="Jimenez A."/>
            <person name="Jonniaux J.-L."/>
            <person name="Karpfinger-Hartl L."/>
            <person name="Lanfranchi G."/>
            <person name="Lepingle A."/>
            <person name="Levesque H."/>
            <person name="Lyck R."/>
            <person name="Maftahi M."/>
            <person name="Mallet L."/>
            <person name="Maurer C.T.C."/>
            <person name="Messenguy F."/>
            <person name="Mewes H.-W."/>
            <person name="Moestl D."/>
            <person name="Nasr F."/>
            <person name="Nicaud J.-M."/>
            <person name="Niedenthal R.K."/>
            <person name="Pandolfo D."/>
            <person name="Pierard A."/>
            <person name="Piravandi E."/>
            <person name="Planta R.J."/>
            <person name="Pohl T.M."/>
            <person name="Purnelle B."/>
            <person name="Rebischung C."/>
            <person name="Remacha M.A."/>
            <person name="Revuelta J.L."/>
            <person name="Rinke M."/>
            <person name="Saiz J.E."/>
            <person name="Sartorello F."/>
            <person name="Scherens B."/>
            <person name="Sen-Gupta M."/>
            <person name="Soler-Mira A."/>
            <person name="Urbanus J.H.M."/>
            <person name="Valle G."/>
            <person name="Van Dyck L."/>
            <person name="Verhasselt P."/>
            <person name="Vierendeels F."/>
            <person name="Vissers S."/>
            <person name="Voet M."/>
            <person name="Volckaert G."/>
            <person name="Wach A."/>
            <person name="Wambutt R."/>
            <person name="Wedler H."/>
            <person name="Zollner A."/>
            <person name="Hani J."/>
        </authorList>
    </citation>
    <scope>NUCLEOTIDE SEQUENCE [LARGE SCALE GENOMIC DNA]</scope>
    <source>
        <strain>ATCC 204508 / S288c</strain>
    </source>
</reference>
<reference key="2">
    <citation type="journal article" date="2014" name="G3 (Bethesda)">
        <title>The reference genome sequence of Saccharomyces cerevisiae: Then and now.</title>
        <authorList>
            <person name="Engel S.R."/>
            <person name="Dietrich F.S."/>
            <person name="Fisk D.G."/>
            <person name="Binkley G."/>
            <person name="Balakrishnan R."/>
            <person name="Costanzo M.C."/>
            <person name="Dwight S.S."/>
            <person name="Hitz B.C."/>
            <person name="Karra K."/>
            <person name="Nash R.S."/>
            <person name="Weng S."/>
            <person name="Wong E.D."/>
            <person name="Lloyd P."/>
            <person name="Skrzypek M.S."/>
            <person name="Miyasato S.R."/>
            <person name="Simison M."/>
            <person name="Cherry J.M."/>
        </authorList>
    </citation>
    <scope>GENOME REANNOTATION</scope>
    <source>
        <strain>ATCC 204508 / S288c</strain>
    </source>
</reference>
<reference key="3">
    <citation type="journal article" date="1997" name="Genes Dev.">
        <title>Tcn1p/Crz1p, a calcineurin-dependent transcription factor that differentially regulates gene expression in Saccharomyces cerevisiae.</title>
        <authorList>
            <person name="Matheos D.P."/>
            <person name="Kingsbury T.J."/>
            <person name="Ahsan U.S."/>
            <person name="Cunningham K.W."/>
        </authorList>
    </citation>
    <scope>FUNCTION</scope>
</reference>
<reference key="4">
    <citation type="journal article" date="1999" name="Genes Dev.">
        <title>Yeast calcineurin regulates nuclear localization of the Crz1p transcription factor through dephosphorylation.</title>
        <authorList>
            <person name="Stathopoulos-Gerontides A."/>
            <person name="Guo J.J."/>
            <person name="Cyert M.S."/>
        </authorList>
    </citation>
    <scope>SUBCELLULAR LOCATION</scope>
    <scope>PHOSPHORYLATION</scope>
</reference>
<reference key="5">
    <citation type="journal article" date="2003" name="Nature">
        <title>Global analysis of protein expression in yeast.</title>
        <authorList>
            <person name="Ghaemmaghami S."/>
            <person name="Huh W.-K."/>
            <person name="Bower K."/>
            <person name="Howson R.W."/>
            <person name="Belle A."/>
            <person name="Dephoure N."/>
            <person name="O'Shea E.K."/>
            <person name="Weissman J.S."/>
        </authorList>
    </citation>
    <scope>LEVEL OF PROTEIN EXPRESSION [LARGE SCALE ANALYSIS]</scope>
</reference>
<reference key="6">
    <citation type="journal article" date="2006" name="Mol. Cell">
        <title>Mapping pathways and phenotypes by systematic gene overexpression.</title>
        <authorList>
            <person name="Sopko R."/>
            <person name="Huang D."/>
            <person name="Preston N."/>
            <person name="Chua G."/>
            <person name="Papp B."/>
            <person name="Kafadar K."/>
            <person name="Snyder M."/>
            <person name="Oliver S.G."/>
            <person name="Cyert M."/>
            <person name="Hughes T.R."/>
            <person name="Boone C."/>
            <person name="Andrews B.J."/>
        </authorList>
    </citation>
    <scope>PHOSPHORYLATION</scope>
</reference>
<reference key="7">
    <citation type="journal article" date="2008" name="Mol. Cell. Proteomics">
        <title>A multidimensional chromatography technology for in-depth phosphoproteome analysis.</title>
        <authorList>
            <person name="Albuquerque C.P."/>
            <person name="Smolka M.B."/>
            <person name="Payne S.H."/>
            <person name="Bafna V."/>
            <person name="Eng J."/>
            <person name="Zhou H."/>
        </authorList>
    </citation>
    <scope>PHOSPHORYLATION [LARGE SCALE ANALYSIS] AT SER-245</scope>
    <scope>IDENTIFICATION BY MASS SPECTROMETRY [LARGE SCALE ANALYSIS]</scope>
</reference>
<reference key="8">
    <citation type="journal article" date="2009" name="Science">
        <title>Global analysis of Cdk1 substrate phosphorylation sites provides insights into evolution.</title>
        <authorList>
            <person name="Holt L.J."/>
            <person name="Tuch B.B."/>
            <person name="Villen J."/>
            <person name="Johnson A.D."/>
            <person name="Gygi S.P."/>
            <person name="Morgan D.O."/>
        </authorList>
    </citation>
    <scope>PHOSPHORYLATION [LARGE SCALE ANALYSIS] AT THR-170; SER-175 AND SER-385</scope>
    <scope>IDENTIFICATION BY MASS SPECTROMETRY [LARGE SCALE ANALYSIS]</scope>
</reference>
<organism>
    <name type="scientific">Saccharomyces cerevisiae (strain ATCC 204508 / S288c)</name>
    <name type="common">Baker's yeast</name>
    <dbReference type="NCBI Taxonomy" id="559292"/>
    <lineage>
        <taxon>Eukaryota</taxon>
        <taxon>Fungi</taxon>
        <taxon>Dikarya</taxon>
        <taxon>Ascomycota</taxon>
        <taxon>Saccharomycotina</taxon>
        <taxon>Saccharomycetes</taxon>
        <taxon>Saccharomycetales</taxon>
        <taxon>Saccharomycetaceae</taxon>
        <taxon>Saccharomyces</taxon>
    </lineage>
</organism>
<keyword id="KW-0963">Cytoplasm</keyword>
<keyword id="KW-0238">DNA-binding</keyword>
<keyword id="KW-0479">Metal-binding</keyword>
<keyword id="KW-0539">Nucleus</keyword>
<keyword id="KW-0597">Phosphoprotein</keyword>
<keyword id="KW-1185">Reference proteome</keyword>
<keyword id="KW-0677">Repeat</keyword>
<keyword id="KW-0804">Transcription</keyword>
<keyword id="KW-0805">Transcription regulation</keyword>
<keyword id="KW-0862">Zinc</keyword>
<keyword id="KW-0863">Zinc-finger</keyword>
<protein>
    <recommendedName>
        <fullName>Transcriptional regulator CRZ1</fullName>
    </recommendedName>
</protein>
<name>CRZ1_YEAST</name>
<feature type="chain" id="PRO_0000046804" description="Transcriptional regulator CRZ1">
    <location>
        <begin position="1"/>
        <end position="678"/>
    </location>
</feature>
<feature type="zinc finger region" description="C2H2-type 1" evidence="1">
    <location>
        <begin position="569"/>
        <end position="591"/>
    </location>
</feature>
<feature type="zinc finger region" description="C2H2-type 2" evidence="1">
    <location>
        <begin position="597"/>
        <end position="619"/>
    </location>
</feature>
<feature type="region of interest" description="Disordered" evidence="2">
    <location>
        <begin position="1"/>
        <end position="50"/>
    </location>
</feature>
<feature type="region of interest" description="Disordered" evidence="2">
    <location>
        <begin position="159"/>
        <end position="195"/>
    </location>
</feature>
<feature type="region of interest" description="Disordered" evidence="2">
    <location>
        <begin position="401"/>
        <end position="486"/>
    </location>
</feature>
<feature type="compositionally biased region" description="Polar residues" evidence="2">
    <location>
        <begin position="1"/>
        <end position="21"/>
    </location>
</feature>
<feature type="compositionally biased region" description="Low complexity" evidence="2">
    <location>
        <begin position="34"/>
        <end position="47"/>
    </location>
</feature>
<feature type="compositionally biased region" description="Polar residues" evidence="2">
    <location>
        <begin position="166"/>
        <end position="195"/>
    </location>
</feature>
<feature type="compositionally biased region" description="Low complexity" evidence="2">
    <location>
        <begin position="410"/>
        <end position="428"/>
    </location>
</feature>
<feature type="compositionally biased region" description="Basic and acidic residues" evidence="2">
    <location>
        <begin position="429"/>
        <end position="446"/>
    </location>
</feature>
<feature type="compositionally biased region" description="Basic and acidic residues" evidence="2">
    <location>
        <begin position="457"/>
        <end position="467"/>
    </location>
</feature>
<feature type="compositionally biased region" description="Low complexity" evidence="2">
    <location>
        <begin position="472"/>
        <end position="486"/>
    </location>
</feature>
<feature type="modified residue" description="Phosphothreonine" evidence="8">
    <location>
        <position position="170"/>
    </location>
</feature>
<feature type="modified residue" description="Phosphoserine" evidence="8">
    <location>
        <position position="175"/>
    </location>
</feature>
<feature type="modified residue" description="Phosphoserine" evidence="7">
    <location>
        <position position="245"/>
    </location>
</feature>
<feature type="modified residue" description="Phosphoserine" evidence="8">
    <location>
        <position position="385"/>
    </location>
</feature>